<accession>B3Q0R5</accession>
<gene>
    <name evidence="1" type="primary">xylA</name>
    <name type="ordered locus">RHECIAT_CH0003919</name>
</gene>
<proteinExistence type="inferred from homology"/>
<reference key="1">
    <citation type="journal article" date="2010" name="Appl. Environ. Microbiol.">
        <title>Conserved symbiotic plasmid DNA sequences in the multireplicon pangenomic structure of Rhizobium etli.</title>
        <authorList>
            <person name="Gonzalez V."/>
            <person name="Acosta J.L."/>
            <person name="Santamaria R.I."/>
            <person name="Bustos P."/>
            <person name="Fernandez J.L."/>
            <person name="Hernandez Gonzalez I.L."/>
            <person name="Diaz R."/>
            <person name="Flores M."/>
            <person name="Palacios R."/>
            <person name="Mora J."/>
            <person name="Davila G."/>
        </authorList>
    </citation>
    <scope>NUCLEOTIDE SEQUENCE [LARGE SCALE GENOMIC DNA]</scope>
    <source>
        <strain>CIAT 652</strain>
    </source>
</reference>
<comment type="catalytic activity">
    <reaction evidence="1">
        <text>alpha-D-xylose = alpha-D-xylulofuranose</text>
        <dbReference type="Rhea" id="RHEA:22816"/>
        <dbReference type="ChEBI" id="CHEBI:28518"/>
        <dbReference type="ChEBI" id="CHEBI:188998"/>
        <dbReference type="EC" id="5.3.1.5"/>
    </reaction>
</comment>
<comment type="cofactor">
    <cofactor evidence="1">
        <name>Mg(2+)</name>
        <dbReference type="ChEBI" id="CHEBI:18420"/>
    </cofactor>
    <text evidence="1">Binds 2 magnesium ions per subunit.</text>
</comment>
<comment type="subunit">
    <text evidence="1">Homotetramer.</text>
</comment>
<comment type="subcellular location">
    <subcellularLocation>
        <location evidence="1">Cytoplasm</location>
    </subcellularLocation>
</comment>
<comment type="similarity">
    <text evidence="1">Belongs to the xylose isomerase family.</text>
</comment>
<dbReference type="EC" id="5.3.1.5" evidence="1"/>
<dbReference type="EMBL" id="CP001074">
    <property type="protein sequence ID" value="ACE92856.1"/>
    <property type="molecule type" value="Genomic_DNA"/>
</dbReference>
<dbReference type="SMR" id="B3Q0R5"/>
<dbReference type="KEGG" id="rec:RHECIAT_CH0003919"/>
<dbReference type="eggNOG" id="COG2115">
    <property type="taxonomic scope" value="Bacteria"/>
</dbReference>
<dbReference type="HOGENOM" id="CLU_037261_1_0_5"/>
<dbReference type="Proteomes" id="UP000008817">
    <property type="component" value="Chromosome"/>
</dbReference>
<dbReference type="GO" id="GO:0005737">
    <property type="term" value="C:cytoplasm"/>
    <property type="evidence" value="ECO:0007669"/>
    <property type="project" value="UniProtKB-SubCell"/>
</dbReference>
<dbReference type="GO" id="GO:0000287">
    <property type="term" value="F:magnesium ion binding"/>
    <property type="evidence" value="ECO:0007669"/>
    <property type="project" value="UniProtKB-UniRule"/>
</dbReference>
<dbReference type="GO" id="GO:0009045">
    <property type="term" value="F:xylose isomerase activity"/>
    <property type="evidence" value="ECO:0007669"/>
    <property type="project" value="UniProtKB-UniRule"/>
</dbReference>
<dbReference type="GO" id="GO:0042732">
    <property type="term" value="P:D-xylose metabolic process"/>
    <property type="evidence" value="ECO:0007669"/>
    <property type="project" value="UniProtKB-UniRule"/>
</dbReference>
<dbReference type="FunFam" id="3.20.20.150:FF:000002">
    <property type="entry name" value="Xylose isomerase"/>
    <property type="match status" value="1"/>
</dbReference>
<dbReference type="Gene3D" id="3.20.20.150">
    <property type="entry name" value="Divalent-metal-dependent TIM barrel enzymes"/>
    <property type="match status" value="1"/>
</dbReference>
<dbReference type="HAMAP" id="MF_00455">
    <property type="entry name" value="Xylose_isom_A"/>
    <property type="match status" value="1"/>
</dbReference>
<dbReference type="InterPro" id="IPR036237">
    <property type="entry name" value="Xyl_isomerase-like_sf"/>
</dbReference>
<dbReference type="InterPro" id="IPR013022">
    <property type="entry name" value="Xyl_isomerase-like_TIM-brl"/>
</dbReference>
<dbReference type="InterPro" id="IPR013452">
    <property type="entry name" value="Xylose_isom_bac"/>
</dbReference>
<dbReference type="InterPro" id="IPR001998">
    <property type="entry name" value="Xylose_isomerase"/>
</dbReference>
<dbReference type="NCBIfam" id="NF003998">
    <property type="entry name" value="PRK05474.1"/>
    <property type="match status" value="1"/>
</dbReference>
<dbReference type="NCBIfam" id="TIGR02630">
    <property type="entry name" value="xylose_isom_A"/>
    <property type="match status" value="1"/>
</dbReference>
<dbReference type="PANTHER" id="PTHR48408">
    <property type="match status" value="1"/>
</dbReference>
<dbReference type="PANTHER" id="PTHR48408:SF1">
    <property type="entry name" value="XYLOSE ISOMERASE"/>
    <property type="match status" value="1"/>
</dbReference>
<dbReference type="Pfam" id="PF01261">
    <property type="entry name" value="AP_endonuc_2"/>
    <property type="match status" value="1"/>
</dbReference>
<dbReference type="PRINTS" id="PR00688">
    <property type="entry name" value="XYLOSISMRASE"/>
</dbReference>
<dbReference type="SUPFAM" id="SSF51658">
    <property type="entry name" value="Xylose isomerase-like"/>
    <property type="match status" value="1"/>
</dbReference>
<dbReference type="PROSITE" id="PS51415">
    <property type="entry name" value="XYLOSE_ISOMERASE"/>
    <property type="match status" value="1"/>
</dbReference>
<keyword id="KW-0119">Carbohydrate metabolism</keyword>
<keyword id="KW-0963">Cytoplasm</keyword>
<keyword id="KW-0413">Isomerase</keyword>
<keyword id="KW-0460">Magnesium</keyword>
<keyword id="KW-0479">Metal-binding</keyword>
<keyword id="KW-0859">Xylose metabolism</keyword>
<name>XYLA_RHIE6</name>
<feature type="chain" id="PRO_1000200299" description="Xylose isomerase">
    <location>
        <begin position="1"/>
        <end position="436"/>
    </location>
</feature>
<feature type="active site" evidence="1">
    <location>
        <position position="100"/>
    </location>
</feature>
<feature type="active site" evidence="1">
    <location>
        <position position="103"/>
    </location>
</feature>
<feature type="binding site" evidence="1">
    <location>
        <position position="231"/>
    </location>
    <ligand>
        <name>Mg(2+)</name>
        <dbReference type="ChEBI" id="CHEBI:18420"/>
        <label>1</label>
    </ligand>
</feature>
<feature type="binding site" evidence="1">
    <location>
        <position position="267"/>
    </location>
    <ligand>
        <name>Mg(2+)</name>
        <dbReference type="ChEBI" id="CHEBI:18420"/>
        <label>1</label>
    </ligand>
</feature>
<feature type="binding site" evidence="1">
    <location>
        <position position="267"/>
    </location>
    <ligand>
        <name>Mg(2+)</name>
        <dbReference type="ChEBI" id="CHEBI:18420"/>
        <label>2</label>
    </ligand>
</feature>
<feature type="binding site" evidence="1">
    <location>
        <position position="270"/>
    </location>
    <ligand>
        <name>Mg(2+)</name>
        <dbReference type="ChEBI" id="CHEBI:18420"/>
        <label>2</label>
    </ligand>
</feature>
<feature type="binding site" evidence="1">
    <location>
        <position position="295"/>
    </location>
    <ligand>
        <name>Mg(2+)</name>
        <dbReference type="ChEBI" id="CHEBI:18420"/>
        <label>1</label>
    </ligand>
</feature>
<feature type="binding site" evidence="1">
    <location>
        <position position="306"/>
    </location>
    <ligand>
        <name>Mg(2+)</name>
        <dbReference type="ChEBI" id="CHEBI:18420"/>
        <label>2</label>
    </ligand>
</feature>
<feature type="binding site" evidence="1">
    <location>
        <position position="308"/>
    </location>
    <ligand>
        <name>Mg(2+)</name>
        <dbReference type="ChEBI" id="CHEBI:18420"/>
        <label>2</label>
    </ligand>
</feature>
<feature type="binding site" evidence="1">
    <location>
        <position position="338"/>
    </location>
    <ligand>
        <name>Mg(2+)</name>
        <dbReference type="ChEBI" id="CHEBI:18420"/>
        <label>1</label>
    </ligand>
</feature>
<organism>
    <name type="scientific">Rhizobium etli (strain CIAT 652)</name>
    <dbReference type="NCBI Taxonomy" id="491916"/>
    <lineage>
        <taxon>Bacteria</taxon>
        <taxon>Pseudomonadati</taxon>
        <taxon>Pseudomonadota</taxon>
        <taxon>Alphaproteobacteria</taxon>
        <taxon>Hyphomicrobiales</taxon>
        <taxon>Rhizobiaceae</taxon>
        <taxon>Rhizobium/Agrobacterium group</taxon>
        <taxon>Rhizobium</taxon>
    </lineage>
</organism>
<protein>
    <recommendedName>
        <fullName evidence="1">Xylose isomerase</fullName>
        <ecNumber evidence="1">5.3.1.5</ecNumber>
    </recommendedName>
</protein>
<evidence type="ECO:0000255" key="1">
    <source>
        <dbReference type="HAMAP-Rule" id="MF_00455"/>
    </source>
</evidence>
<sequence length="436" mass="48956">MSTGFFGDIQKIKYEGPDSTNPLAFRHYQPDEIVLGKRMEDHLRFAVAYWHTFTWPGGDPFGGQTFLRPWFEDTMKAAKLKADVAFEFFSLLGAPYYCFHDADVRPEGRNFAENTKNLNEIVDYFAEKQAATGTKLLWGTANLFSNRRYMSGAATNPDPDVFAFAAATVKTCIDATQKLGGENYVLWGGREGYETLLNTDLKRELDQLGRFLNLVVEYKHKIGFKGTILIEPKPQEPTKHQYDYDVATVYGFLKKHGVENEVKVNIEQGHAILAGHSFEHELALANALGIFGSIDMNRNDYQSGWDTDQFPNNVPEMALAYYHVLAGGGFKTGGTNFDAKLRRQSLDPADLLIGHIGGMDCCARGLKAAAKMIEDKALSQPLADRYAGWESAEAQKLFRGEYSLDEITNWVESHDVNPQPKSGKQELLENVVNRYV</sequence>